<evidence type="ECO:0000255" key="1">
    <source>
        <dbReference type="HAMAP-Rule" id="MF_00921"/>
    </source>
</evidence>
<proteinExistence type="inferred from homology"/>
<reference key="1">
    <citation type="journal article" date="2001" name="Lancet">
        <title>Whole genome sequencing of meticillin-resistant Staphylococcus aureus.</title>
        <authorList>
            <person name="Kuroda M."/>
            <person name="Ohta T."/>
            <person name="Uchiyama I."/>
            <person name="Baba T."/>
            <person name="Yuzawa H."/>
            <person name="Kobayashi I."/>
            <person name="Cui L."/>
            <person name="Oguchi A."/>
            <person name="Aoki K."/>
            <person name="Nagai Y."/>
            <person name="Lian J.-Q."/>
            <person name="Ito T."/>
            <person name="Kanamori M."/>
            <person name="Matsumaru H."/>
            <person name="Maruyama A."/>
            <person name="Murakami H."/>
            <person name="Hosoyama A."/>
            <person name="Mizutani-Ui Y."/>
            <person name="Takahashi N.K."/>
            <person name="Sawano T."/>
            <person name="Inoue R."/>
            <person name="Kaito C."/>
            <person name="Sekimizu K."/>
            <person name="Hirakawa H."/>
            <person name="Kuhara S."/>
            <person name="Goto S."/>
            <person name="Yabuzaki J."/>
            <person name="Kanehisa M."/>
            <person name="Yamashita A."/>
            <person name="Oshima K."/>
            <person name="Furuya K."/>
            <person name="Yoshino C."/>
            <person name="Shiba T."/>
            <person name="Hattori M."/>
            <person name="Ogasawara N."/>
            <person name="Hayashi H."/>
            <person name="Hiramatsu K."/>
        </authorList>
    </citation>
    <scope>NUCLEOTIDE SEQUENCE [LARGE SCALE GENOMIC DNA]</scope>
    <source>
        <strain>N315</strain>
    </source>
</reference>
<feature type="chain" id="PRO_0000196720" description="Putative pyruvate, phosphate dikinase regulatory protein">
    <location>
        <begin position="1"/>
        <end position="272"/>
    </location>
</feature>
<feature type="binding site" evidence="1">
    <location>
        <begin position="151"/>
        <end position="158"/>
    </location>
    <ligand>
        <name>ADP</name>
        <dbReference type="ChEBI" id="CHEBI:456216"/>
    </ligand>
</feature>
<protein>
    <recommendedName>
        <fullName evidence="1">Putative pyruvate, phosphate dikinase regulatory protein</fullName>
        <shortName evidence="1">PPDK regulatory protein</shortName>
        <ecNumber evidence="1">2.7.11.32</ecNumber>
        <ecNumber evidence="1">2.7.4.27</ecNumber>
    </recommendedName>
</protein>
<accession>P67200</accession>
<accession>Q99TT3</accession>
<gene>
    <name type="ordered locus">SA1392</name>
</gene>
<organism>
    <name type="scientific">Staphylococcus aureus (strain N315)</name>
    <dbReference type="NCBI Taxonomy" id="158879"/>
    <lineage>
        <taxon>Bacteria</taxon>
        <taxon>Bacillati</taxon>
        <taxon>Bacillota</taxon>
        <taxon>Bacilli</taxon>
        <taxon>Bacillales</taxon>
        <taxon>Staphylococcaceae</taxon>
        <taxon>Staphylococcus</taxon>
    </lineage>
</organism>
<comment type="function">
    <text evidence="1">Bifunctional serine/threonine kinase and phosphorylase involved in the regulation of the pyruvate, phosphate dikinase (PPDK) by catalyzing its phosphorylation/dephosphorylation.</text>
</comment>
<comment type="catalytic activity">
    <reaction evidence="1">
        <text>N(tele)-phospho-L-histidyl/L-threonyl-[pyruvate, phosphate dikinase] + ADP = N(tele)-phospho-L-histidyl/O-phospho-L-threonyl-[pyruvate, phosphate dikinase] + AMP + H(+)</text>
        <dbReference type="Rhea" id="RHEA:43692"/>
        <dbReference type="Rhea" id="RHEA-COMP:10650"/>
        <dbReference type="Rhea" id="RHEA-COMP:10651"/>
        <dbReference type="ChEBI" id="CHEBI:15378"/>
        <dbReference type="ChEBI" id="CHEBI:30013"/>
        <dbReference type="ChEBI" id="CHEBI:61977"/>
        <dbReference type="ChEBI" id="CHEBI:83586"/>
        <dbReference type="ChEBI" id="CHEBI:456215"/>
        <dbReference type="ChEBI" id="CHEBI:456216"/>
        <dbReference type="EC" id="2.7.11.32"/>
    </reaction>
</comment>
<comment type="catalytic activity">
    <reaction evidence="1">
        <text>N(tele)-phospho-L-histidyl/O-phospho-L-threonyl-[pyruvate, phosphate dikinase] + phosphate + H(+) = N(tele)-phospho-L-histidyl/L-threonyl-[pyruvate, phosphate dikinase] + diphosphate</text>
        <dbReference type="Rhea" id="RHEA:43696"/>
        <dbReference type="Rhea" id="RHEA-COMP:10650"/>
        <dbReference type="Rhea" id="RHEA-COMP:10651"/>
        <dbReference type="ChEBI" id="CHEBI:15378"/>
        <dbReference type="ChEBI" id="CHEBI:30013"/>
        <dbReference type="ChEBI" id="CHEBI:33019"/>
        <dbReference type="ChEBI" id="CHEBI:43474"/>
        <dbReference type="ChEBI" id="CHEBI:61977"/>
        <dbReference type="ChEBI" id="CHEBI:83586"/>
        <dbReference type="EC" id="2.7.4.27"/>
    </reaction>
</comment>
<comment type="similarity">
    <text evidence="1">Belongs to the pyruvate, phosphate/water dikinase regulatory protein family. PDRP subfamily.</text>
</comment>
<dbReference type="EC" id="2.7.11.32" evidence="1"/>
<dbReference type="EC" id="2.7.4.27" evidence="1"/>
<dbReference type="EMBL" id="BA000018">
    <property type="protein sequence ID" value="BAB42655.1"/>
    <property type="molecule type" value="Genomic_DNA"/>
</dbReference>
<dbReference type="PIR" id="B89937">
    <property type="entry name" value="B89937"/>
</dbReference>
<dbReference type="RefSeq" id="WP_000411298.1">
    <property type="nucleotide sequence ID" value="NC_002745.2"/>
</dbReference>
<dbReference type="SMR" id="P67200"/>
<dbReference type="EnsemblBacteria" id="BAB42655">
    <property type="protein sequence ID" value="BAB42655"/>
    <property type="gene ID" value="BAB42655"/>
</dbReference>
<dbReference type="KEGG" id="sau:SA1392"/>
<dbReference type="HOGENOM" id="CLU_046206_2_1_9"/>
<dbReference type="GO" id="GO:0043531">
    <property type="term" value="F:ADP binding"/>
    <property type="evidence" value="ECO:0007669"/>
    <property type="project" value="UniProtKB-UniRule"/>
</dbReference>
<dbReference type="GO" id="GO:0005524">
    <property type="term" value="F:ATP binding"/>
    <property type="evidence" value="ECO:0007669"/>
    <property type="project" value="InterPro"/>
</dbReference>
<dbReference type="GO" id="GO:0016776">
    <property type="term" value="F:phosphotransferase activity, phosphate group as acceptor"/>
    <property type="evidence" value="ECO:0007669"/>
    <property type="project" value="UniProtKB-UniRule"/>
</dbReference>
<dbReference type="GO" id="GO:0004674">
    <property type="term" value="F:protein serine/threonine kinase activity"/>
    <property type="evidence" value="ECO:0007669"/>
    <property type="project" value="UniProtKB-UniRule"/>
</dbReference>
<dbReference type="HAMAP" id="MF_00921">
    <property type="entry name" value="PDRP"/>
    <property type="match status" value="1"/>
</dbReference>
<dbReference type="InterPro" id="IPR005177">
    <property type="entry name" value="Kinase-pyrophosphorylase"/>
</dbReference>
<dbReference type="InterPro" id="IPR026565">
    <property type="entry name" value="PPDK_reg"/>
</dbReference>
<dbReference type="NCBIfam" id="NF003742">
    <property type="entry name" value="PRK05339.1"/>
    <property type="match status" value="1"/>
</dbReference>
<dbReference type="PANTHER" id="PTHR31756">
    <property type="entry name" value="PYRUVATE, PHOSPHATE DIKINASE REGULATORY PROTEIN 1, CHLOROPLASTIC"/>
    <property type="match status" value="1"/>
</dbReference>
<dbReference type="PANTHER" id="PTHR31756:SF3">
    <property type="entry name" value="PYRUVATE, PHOSPHATE DIKINASE REGULATORY PROTEIN 1, CHLOROPLASTIC"/>
    <property type="match status" value="1"/>
</dbReference>
<dbReference type="Pfam" id="PF03618">
    <property type="entry name" value="Kinase-PPPase"/>
    <property type="match status" value="1"/>
</dbReference>
<name>PDRP_STAAN</name>
<sequence length="272" mass="30785">MEKIKIIVASDSIGETAELVARAGISQFNPKQCKNELLRYPYIESFEDVDEVIQVAKDTNAIIVYTLIKPEMKQYMSEKVAEFQLKSVDIMGPLMDLLSASVEEKPYNEPGIVHRLDDAYFKKIDAIEFAVKYDDGKDPKGLPKADIVLLGISRTSKTPLSQYLAHKSYKVMNVPIVPEVTPPDGLYDIDPKKCIALKISEEKLNRIRKERLKQLGLGDTARYATEARIQEELNYFEEIVSEIGCPVIDVSQKAIEETANDIIHYIEQNKSK</sequence>
<keyword id="KW-0418">Kinase</keyword>
<keyword id="KW-0547">Nucleotide-binding</keyword>
<keyword id="KW-0723">Serine/threonine-protein kinase</keyword>
<keyword id="KW-0808">Transferase</keyword>